<sequence>MAHKKGVGSSKNGRESHSKRLGVKVFGGEICKAGDILVRQRGTKHHPGNNVGIGKDHTLYSLIEGRVIFRKKQENRSYVSVEIIA</sequence>
<gene>
    <name evidence="1" type="primary">rpmA</name>
    <name type="ordered locus">CFPG_537</name>
</gene>
<keyword id="KW-1185">Reference proteome</keyword>
<keyword id="KW-0687">Ribonucleoprotein</keyword>
<keyword id="KW-0689">Ribosomal protein</keyword>
<proteinExistence type="inferred from homology"/>
<comment type="similarity">
    <text evidence="1">Belongs to the bacterial ribosomal protein bL27 family.</text>
</comment>
<feature type="chain" id="PRO_1000128690" description="Large ribosomal subunit protein bL27">
    <location>
        <begin position="1"/>
        <end position="85"/>
    </location>
</feature>
<evidence type="ECO:0000255" key="1">
    <source>
        <dbReference type="HAMAP-Rule" id="MF_00539"/>
    </source>
</evidence>
<evidence type="ECO:0000305" key="2"/>
<protein>
    <recommendedName>
        <fullName evidence="1">Large ribosomal subunit protein bL27</fullName>
    </recommendedName>
    <alternativeName>
        <fullName evidence="2">50S ribosomal protein L27</fullName>
    </alternativeName>
</protein>
<organism>
    <name type="scientific">Azobacteroides pseudotrichonymphae genomovar. CFP2</name>
    <dbReference type="NCBI Taxonomy" id="511995"/>
    <lineage>
        <taxon>Bacteria</taxon>
        <taxon>Pseudomonadati</taxon>
        <taxon>Bacteroidota</taxon>
        <taxon>Bacteroidia</taxon>
        <taxon>Bacteroidales</taxon>
        <taxon>Candidatus Azobacteroides</taxon>
    </lineage>
</organism>
<accession>B6YRH8</accession>
<name>RL27_AZOPC</name>
<dbReference type="EMBL" id="AP010656">
    <property type="protein sequence ID" value="BAG83800.1"/>
    <property type="molecule type" value="Genomic_DNA"/>
</dbReference>
<dbReference type="RefSeq" id="WP_012573561.1">
    <property type="nucleotide sequence ID" value="NC_011565.1"/>
</dbReference>
<dbReference type="SMR" id="B6YRH8"/>
<dbReference type="STRING" id="511995.CFPG_537"/>
<dbReference type="KEGG" id="aps:CFPG_537"/>
<dbReference type="eggNOG" id="COG0211">
    <property type="taxonomic scope" value="Bacteria"/>
</dbReference>
<dbReference type="HOGENOM" id="CLU_095424_4_0_10"/>
<dbReference type="OrthoDB" id="9803474at2"/>
<dbReference type="Proteomes" id="UP000000723">
    <property type="component" value="Chromosome"/>
</dbReference>
<dbReference type="GO" id="GO:0022625">
    <property type="term" value="C:cytosolic large ribosomal subunit"/>
    <property type="evidence" value="ECO:0007669"/>
    <property type="project" value="TreeGrafter"/>
</dbReference>
<dbReference type="GO" id="GO:0003735">
    <property type="term" value="F:structural constituent of ribosome"/>
    <property type="evidence" value="ECO:0007669"/>
    <property type="project" value="InterPro"/>
</dbReference>
<dbReference type="GO" id="GO:0006412">
    <property type="term" value="P:translation"/>
    <property type="evidence" value="ECO:0007669"/>
    <property type="project" value="UniProtKB-UniRule"/>
</dbReference>
<dbReference type="FunFam" id="2.40.50.100:FF:000020">
    <property type="entry name" value="50S ribosomal protein L27"/>
    <property type="match status" value="1"/>
</dbReference>
<dbReference type="Gene3D" id="2.40.50.100">
    <property type="match status" value="1"/>
</dbReference>
<dbReference type="HAMAP" id="MF_00539">
    <property type="entry name" value="Ribosomal_bL27"/>
    <property type="match status" value="1"/>
</dbReference>
<dbReference type="InterPro" id="IPR001684">
    <property type="entry name" value="Ribosomal_bL27"/>
</dbReference>
<dbReference type="InterPro" id="IPR018261">
    <property type="entry name" value="Ribosomal_bL27_CS"/>
</dbReference>
<dbReference type="NCBIfam" id="TIGR00062">
    <property type="entry name" value="L27"/>
    <property type="match status" value="1"/>
</dbReference>
<dbReference type="PANTHER" id="PTHR15893:SF0">
    <property type="entry name" value="LARGE RIBOSOMAL SUBUNIT PROTEIN BL27M"/>
    <property type="match status" value="1"/>
</dbReference>
<dbReference type="PANTHER" id="PTHR15893">
    <property type="entry name" value="RIBOSOMAL PROTEIN L27"/>
    <property type="match status" value="1"/>
</dbReference>
<dbReference type="Pfam" id="PF01016">
    <property type="entry name" value="Ribosomal_L27"/>
    <property type="match status" value="1"/>
</dbReference>
<dbReference type="PRINTS" id="PR00063">
    <property type="entry name" value="RIBOSOMALL27"/>
</dbReference>
<dbReference type="SUPFAM" id="SSF110324">
    <property type="entry name" value="Ribosomal L27 protein-like"/>
    <property type="match status" value="1"/>
</dbReference>
<dbReference type="PROSITE" id="PS00831">
    <property type="entry name" value="RIBOSOMAL_L27"/>
    <property type="match status" value="1"/>
</dbReference>
<reference key="1">
    <citation type="journal article" date="2008" name="Science">
        <title>Genome of an endosymbiont coupling N2 fixation to cellulolysis within RT protist cells in termite gut.</title>
        <authorList>
            <person name="Hongoh Y."/>
            <person name="Sharma V.K."/>
            <person name="Prakash T."/>
            <person name="Noda S."/>
            <person name="Toh H."/>
            <person name="Taylor T.D."/>
            <person name="Kudo T."/>
            <person name="Sakaki Y."/>
            <person name="Toyoda A."/>
            <person name="Hattori M."/>
            <person name="Ohkuma M."/>
        </authorList>
    </citation>
    <scope>NUCLEOTIDE SEQUENCE [LARGE SCALE GENOMIC DNA]</scope>
</reference>